<accession>Q5WYB5</accession>
<organism>
    <name type="scientific">Legionella pneumophila (strain Lens)</name>
    <dbReference type="NCBI Taxonomy" id="297245"/>
    <lineage>
        <taxon>Bacteria</taxon>
        <taxon>Pseudomonadati</taxon>
        <taxon>Pseudomonadota</taxon>
        <taxon>Gammaproteobacteria</taxon>
        <taxon>Legionellales</taxon>
        <taxon>Legionellaceae</taxon>
        <taxon>Legionella</taxon>
    </lineage>
</organism>
<proteinExistence type="inferred from homology"/>
<comment type="function">
    <text evidence="1">Component of the acetyl coenzyme A carboxylase (ACC) complex. First, biotin carboxylase catalyzes the carboxylation of biotin on its carrier protein (BCCP) and then the CO(2) group is transferred by the carboxyltransferase to acetyl-CoA to form malonyl-CoA.</text>
</comment>
<comment type="catalytic activity">
    <reaction evidence="1">
        <text>N(6)-carboxybiotinyl-L-lysyl-[protein] + acetyl-CoA = N(6)-biotinyl-L-lysyl-[protein] + malonyl-CoA</text>
        <dbReference type="Rhea" id="RHEA:54728"/>
        <dbReference type="Rhea" id="RHEA-COMP:10505"/>
        <dbReference type="Rhea" id="RHEA-COMP:10506"/>
        <dbReference type="ChEBI" id="CHEBI:57288"/>
        <dbReference type="ChEBI" id="CHEBI:57384"/>
        <dbReference type="ChEBI" id="CHEBI:83144"/>
        <dbReference type="ChEBI" id="CHEBI:83145"/>
        <dbReference type="EC" id="2.1.3.15"/>
    </reaction>
</comment>
<comment type="pathway">
    <text evidence="1">Lipid metabolism; malonyl-CoA biosynthesis; malonyl-CoA from acetyl-CoA: step 1/1.</text>
</comment>
<comment type="subunit">
    <text evidence="1">Acetyl-CoA carboxylase is a heterohexamer composed of biotin carboxyl carrier protein (AccB), biotin carboxylase (AccC) and two subunits each of ACCase subunit alpha (AccA) and ACCase subunit beta (AccD).</text>
</comment>
<comment type="subcellular location">
    <subcellularLocation>
        <location evidence="1">Cytoplasm</location>
    </subcellularLocation>
</comment>
<comment type="similarity">
    <text evidence="1">Belongs to the AccA family.</text>
</comment>
<protein>
    <recommendedName>
        <fullName evidence="1">Acetyl-coenzyme A carboxylase carboxyl transferase subunit alpha</fullName>
        <shortName evidence="1">ACCase subunit alpha</shortName>
        <shortName evidence="1">Acetyl-CoA carboxylase carboxyltransferase subunit alpha</shortName>
        <ecNumber evidence="1">2.1.3.15</ecNumber>
    </recommendedName>
</protein>
<evidence type="ECO:0000255" key="1">
    <source>
        <dbReference type="HAMAP-Rule" id="MF_00823"/>
    </source>
</evidence>
<evidence type="ECO:0000255" key="2">
    <source>
        <dbReference type="PROSITE-ProRule" id="PRU01137"/>
    </source>
</evidence>
<keyword id="KW-0067">ATP-binding</keyword>
<keyword id="KW-0963">Cytoplasm</keyword>
<keyword id="KW-0275">Fatty acid biosynthesis</keyword>
<keyword id="KW-0276">Fatty acid metabolism</keyword>
<keyword id="KW-0444">Lipid biosynthesis</keyword>
<keyword id="KW-0443">Lipid metabolism</keyword>
<keyword id="KW-0547">Nucleotide-binding</keyword>
<keyword id="KW-0808">Transferase</keyword>
<dbReference type="EC" id="2.1.3.15" evidence="1"/>
<dbReference type="EMBL" id="CR628337">
    <property type="protein sequence ID" value="CAH15058.1"/>
    <property type="molecule type" value="Genomic_DNA"/>
</dbReference>
<dbReference type="RefSeq" id="WP_010946522.1">
    <property type="nucleotide sequence ID" value="NC_006369.1"/>
</dbReference>
<dbReference type="SMR" id="Q5WYB5"/>
<dbReference type="KEGG" id="lpf:lpl0824"/>
<dbReference type="LegioList" id="lpl0824"/>
<dbReference type="HOGENOM" id="CLU_015486_0_2_6"/>
<dbReference type="UniPathway" id="UPA00655">
    <property type="reaction ID" value="UER00711"/>
</dbReference>
<dbReference type="Proteomes" id="UP000002517">
    <property type="component" value="Chromosome"/>
</dbReference>
<dbReference type="GO" id="GO:0009317">
    <property type="term" value="C:acetyl-CoA carboxylase complex"/>
    <property type="evidence" value="ECO:0007669"/>
    <property type="project" value="InterPro"/>
</dbReference>
<dbReference type="GO" id="GO:0003989">
    <property type="term" value="F:acetyl-CoA carboxylase activity"/>
    <property type="evidence" value="ECO:0007669"/>
    <property type="project" value="InterPro"/>
</dbReference>
<dbReference type="GO" id="GO:0005524">
    <property type="term" value="F:ATP binding"/>
    <property type="evidence" value="ECO:0007669"/>
    <property type="project" value="UniProtKB-KW"/>
</dbReference>
<dbReference type="GO" id="GO:0016743">
    <property type="term" value="F:carboxyl- or carbamoyltransferase activity"/>
    <property type="evidence" value="ECO:0007669"/>
    <property type="project" value="UniProtKB-UniRule"/>
</dbReference>
<dbReference type="GO" id="GO:0006633">
    <property type="term" value="P:fatty acid biosynthetic process"/>
    <property type="evidence" value="ECO:0007669"/>
    <property type="project" value="UniProtKB-KW"/>
</dbReference>
<dbReference type="GO" id="GO:2001295">
    <property type="term" value="P:malonyl-CoA biosynthetic process"/>
    <property type="evidence" value="ECO:0007669"/>
    <property type="project" value="UniProtKB-UniRule"/>
</dbReference>
<dbReference type="Gene3D" id="3.90.226.10">
    <property type="entry name" value="2-enoyl-CoA Hydratase, Chain A, domain 1"/>
    <property type="match status" value="1"/>
</dbReference>
<dbReference type="HAMAP" id="MF_00823">
    <property type="entry name" value="AcetylCoA_CT_alpha"/>
    <property type="match status" value="1"/>
</dbReference>
<dbReference type="InterPro" id="IPR001095">
    <property type="entry name" value="Acetyl_CoA_COase_a_su"/>
</dbReference>
<dbReference type="InterPro" id="IPR029045">
    <property type="entry name" value="ClpP/crotonase-like_dom_sf"/>
</dbReference>
<dbReference type="InterPro" id="IPR011763">
    <property type="entry name" value="COA_CT_C"/>
</dbReference>
<dbReference type="NCBIfam" id="TIGR00513">
    <property type="entry name" value="accA"/>
    <property type="match status" value="1"/>
</dbReference>
<dbReference type="NCBIfam" id="NF041504">
    <property type="entry name" value="AccA_sub"/>
    <property type="match status" value="1"/>
</dbReference>
<dbReference type="NCBIfam" id="NF004344">
    <property type="entry name" value="PRK05724.1"/>
    <property type="match status" value="1"/>
</dbReference>
<dbReference type="PANTHER" id="PTHR42853">
    <property type="entry name" value="ACETYL-COENZYME A CARBOXYLASE CARBOXYL TRANSFERASE SUBUNIT ALPHA"/>
    <property type="match status" value="1"/>
</dbReference>
<dbReference type="PANTHER" id="PTHR42853:SF3">
    <property type="entry name" value="ACETYL-COENZYME A CARBOXYLASE CARBOXYL TRANSFERASE SUBUNIT ALPHA, CHLOROPLASTIC"/>
    <property type="match status" value="1"/>
</dbReference>
<dbReference type="Pfam" id="PF03255">
    <property type="entry name" value="ACCA"/>
    <property type="match status" value="1"/>
</dbReference>
<dbReference type="PRINTS" id="PR01069">
    <property type="entry name" value="ACCCTRFRASEA"/>
</dbReference>
<dbReference type="SUPFAM" id="SSF52096">
    <property type="entry name" value="ClpP/crotonase"/>
    <property type="match status" value="1"/>
</dbReference>
<dbReference type="PROSITE" id="PS50989">
    <property type="entry name" value="COA_CT_CTER"/>
    <property type="match status" value="1"/>
</dbReference>
<name>ACCA_LEGPL</name>
<sequence length="317" mass="35505">MTRQFLEFEQPIEELNQKIEALRMVGSDNEVNLSEEIARLEAKCSELTENIFSRLEPWQIAQMARHPLRPQTTDYIERIFTDFQELHGDRSYSSAPAIIGGMARLNGEPVMVLGHQKGKRTKEKVYRNFGMARPEEYRKALRLMRMAEKFKMPVVTFIDTAGAYPGIGAEERNQSEAIARNLFAMSRIKTPIVCIVTGEAGSGGALAIGVGDKIIMLQFSIYSVISPEGCASILWKDASKASEAARAMGITADRIFENELVDMVVPEPLGGAHRDVDEMASRLKRLLTSELQALKKVPLDQLIELRYQKFMAMGACD</sequence>
<reference key="1">
    <citation type="journal article" date="2004" name="Nat. Genet.">
        <title>Evidence in the Legionella pneumophila genome for exploitation of host cell functions and high genome plasticity.</title>
        <authorList>
            <person name="Cazalet C."/>
            <person name="Rusniok C."/>
            <person name="Brueggemann H."/>
            <person name="Zidane N."/>
            <person name="Magnier A."/>
            <person name="Ma L."/>
            <person name="Tichit M."/>
            <person name="Jarraud S."/>
            <person name="Bouchier C."/>
            <person name="Vandenesch F."/>
            <person name="Kunst F."/>
            <person name="Etienne J."/>
            <person name="Glaser P."/>
            <person name="Buchrieser C."/>
        </authorList>
    </citation>
    <scope>NUCLEOTIDE SEQUENCE [LARGE SCALE GENOMIC DNA]</scope>
    <source>
        <strain>Lens</strain>
    </source>
</reference>
<feature type="chain" id="PRO_0000223779" description="Acetyl-coenzyme A carboxylase carboxyl transferase subunit alpha">
    <location>
        <begin position="1"/>
        <end position="317"/>
    </location>
</feature>
<feature type="domain" description="CoA carboxyltransferase C-terminal" evidence="2">
    <location>
        <begin position="32"/>
        <end position="293"/>
    </location>
</feature>
<gene>
    <name evidence="1" type="primary">accA</name>
    <name type="ordered locus">lpl0824</name>
</gene>